<dbReference type="EC" id="3.4.21.89" evidence="1"/>
<dbReference type="EMBL" id="GL377307">
    <property type="protein sequence ID" value="EFI96467.1"/>
    <property type="molecule type" value="Genomic_DNA"/>
</dbReference>
<dbReference type="RefSeq" id="XP_003031370.1">
    <property type="nucleotide sequence ID" value="XM_003031324.1"/>
</dbReference>
<dbReference type="SMR" id="D8Q7Q5"/>
<dbReference type="FunCoup" id="D8Q7Q5">
    <property type="interactions" value="279"/>
</dbReference>
<dbReference type="STRING" id="578458.D8Q7Q5"/>
<dbReference type="MEROPS" id="S26.010"/>
<dbReference type="GlyCosmos" id="D8Q7Q5">
    <property type="glycosylation" value="1 site, No reported glycans"/>
</dbReference>
<dbReference type="GeneID" id="9586711"/>
<dbReference type="KEGG" id="scm:SCHCO_02504316"/>
<dbReference type="VEuPathDB" id="FungiDB:SCHCODRAFT_02504316"/>
<dbReference type="eggNOG" id="KOG3342">
    <property type="taxonomic scope" value="Eukaryota"/>
</dbReference>
<dbReference type="HOGENOM" id="CLU_089996_0_1_1"/>
<dbReference type="InParanoid" id="D8Q7Q5"/>
<dbReference type="OMA" id="ILMNEYP"/>
<dbReference type="OrthoDB" id="10257561at2759"/>
<dbReference type="Proteomes" id="UP000007431">
    <property type="component" value="Unassembled WGS sequence"/>
</dbReference>
<dbReference type="GO" id="GO:0005787">
    <property type="term" value="C:signal peptidase complex"/>
    <property type="evidence" value="ECO:0007669"/>
    <property type="project" value="TreeGrafter"/>
</dbReference>
<dbReference type="GO" id="GO:0004252">
    <property type="term" value="F:serine-type endopeptidase activity"/>
    <property type="evidence" value="ECO:0007669"/>
    <property type="project" value="UniProtKB-EC"/>
</dbReference>
<dbReference type="GO" id="GO:0006465">
    <property type="term" value="P:signal peptide processing"/>
    <property type="evidence" value="ECO:0007669"/>
    <property type="project" value="InterPro"/>
</dbReference>
<dbReference type="CDD" id="cd06530">
    <property type="entry name" value="S26_SPase_I"/>
    <property type="match status" value="1"/>
</dbReference>
<dbReference type="InterPro" id="IPR036286">
    <property type="entry name" value="LexA/Signal_pep-like_sf"/>
</dbReference>
<dbReference type="InterPro" id="IPR019756">
    <property type="entry name" value="Pept_S26A_signal_pept_1_Ser-AS"/>
</dbReference>
<dbReference type="InterPro" id="IPR019533">
    <property type="entry name" value="Peptidase_S26"/>
</dbReference>
<dbReference type="InterPro" id="IPR001733">
    <property type="entry name" value="Peptidase_S26B"/>
</dbReference>
<dbReference type="NCBIfam" id="TIGR02228">
    <property type="entry name" value="sigpep_I_arch"/>
    <property type="match status" value="1"/>
</dbReference>
<dbReference type="PANTHER" id="PTHR10806">
    <property type="entry name" value="SIGNAL PEPTIDASE COMPLEX CATALYTIC SUBUNIT SEC11"/>
    <property type="match status" value="1"/>
</dbReference>
<dbReference type="PANTHER" id="PTHR10806:SF6">
    <property type="entry name" value="SIGNAL PEPTIDASE COMPLEX CATALYTIC SUBUNIT SEC11"/>
    <property type="match status" value="1"/>
</dbReference>
<dbReference type="PRINTS" id="PR00728">
    <property type="entry name" value="SIGNALPTASE"/>
</dbReference>
<dbReference type="SUPFAM" id="SSF51306">
    <property type="entry name" value="LexA/Signal peptidase"/>
    <property type="match status" value="1"/>
</dbReference>
<dbReference type="PROSITE" id="PS00501">
    <property type="entry name" value="SPASE_I_1"/>
    <property type="match status" value="1"/>
</dbReference>
<dbReference type="PROSITE" id="PS00761">
    <property type="entry name" value="SPASE_I_3"/>
    <property type="match status" value="1"/>
</dbReference>
<keyword id="KW-0256">Endoplasmic reticulum</keyword>
<keyword id="KW-0325">Glycoprotein</keyword>
<keyword id="KW-0378">Hydrolase</keyword>
<keyword id="KW-0472">Membrane</keyword>
<keyword id="KW-0645">Protease</keyword>
<keyword id="KW-1185">Reference proteome</keyword>
<keyword id="KW-0735">Signal-anchor</keyword>
<keyword id="KW-0812">Transmembrane</keyword>
<keyword id="KW-1133">Transmembrane helix</keyword>
<gene>
    <name type="primary">SEC11</name>
    <name type="ORF">SCHCODRAFT_56459</name>
</gene>
<feature type="chain" id="PRO_0000412364" description="Signal peptidase complex catalytic subunit SEC11">
    <location>
        <begin position="1"/>
        <end position="193"/>
    </location>
</feature>
<feature type="topological domain" description="Cytoplasmic" evidence="3">
    <location>
        <begin position="1"/>
        <end position="16"/>
    </location>
</feature>
<feature type="transmembrane region" description="Helical; Signal-anchor for type II membrane protein" evidence="3">
    <location>
        <begin position="17"/>
        <end position="41"/>
    </location>
</feature>
<feature type="topological domain" description="Lumenal" evidence="3">
    <location>
        <begin position="42"/>
        <end position="193"/>
    </location>
</feature>
<feature type="region of interest" description="C-terminal short (CTS) helix" evidence="2">
    <location>
        <begin position="179"/>
        <end position="190"/>
    </location>
</feature>
<feature type="active site" description="Charge relay system" evidence="1">
    <location>
        <position position="55"/>
    </location>
</feature>
<feature type="active site" description="Charge relay system" evidence="1">
    <location>
        <position position="95"/>
    </location>
</feature>
<feature type="active site" description="Charge relay system" evidence="1">
    <location>
        <position position="136"/>
    </location>
</feature>
<feature type="glycosylation site" description="N-linked (GlcNAc...) asparagine" evidence="3">
    <location>
        <position position="106"/>
    </location>
</feature>
<name>SEC11_SCHCM</name>
<proteinExistence type="inferred from homology"/>
<evidence type="ECO:0000250" key="1">
    <source>
        <dbReference type="UniProtKB" id="P15367"/>
    </source>
</evidence>
<evidence type="ECO:0000250" key="2">
    <source>
        <dbReference type="UniProtKB" id="P67812"/>
    </source>
</evidence>
<evidence type="ECO:0000255" key="3"/>
<evidence type="ECO:0000305" key="4"/>
<protein>
    <recommendedName>
        <fullName>Signal peptidase complex catalytic subunit SEC11</fullName>
        <ecNumber evidence="1">3.4.21.89</ecNumber>
    </recommendedName>
    <alternativeName>
        <fullName>Signal peptidase I</fullName>
    </alternativeName>
</protein>
<comment type="function">
    <text evidence="1 2">Catalytic component of the signal peptidase complex (SPC) which catalyzes the cleavage of N-terminal signal sequences from nascent proteins as they are translocated into the lumen of the endoplasmic reticulum (By similarity). Specifically cleaves N-terminal signal peptides that contain a hydrophobic alpha-helix (h-region) shorter than 18-20 amino acids (By similarity).</text>
</comment>
<comment type="catalytic activity">
    <reaction evidence="1">
        <text>Cleavage of hydrophobic, N-terminal signal or leader sequences from secreted and periplasmic proteins.</text>
        <dbReference type="EC" id="3.4.21.89"/>
    </reaction>
</comment>
<comment type="subunit">
    <text evidence="1 2">Component of the signal peptidase complex (SPC) composed of a catalytic subunit SEC11 and three accessory subunits SPC1, SPC2 and SPC3 (By similarity). The complex induces a local thinning of the ER membrane which is used to measure the length of the signal peptide (SP) h-region of protein substrates. This ensures the selectivity of the complex towards h-regions shorter than 18-20 amino acids (By similarity). SPC associates with the translocon complex (By similarity).</text>
</comment>
<comment type="subcellular location">
    <subcellularLocation>
        <location evidence="1">Endoplasmic reticulum membrane</location>
        <topology evidence="1">Single-pass type II membrane protein</topology>
    </subcellularLocation>
</comment>
<comment type="domain">
    <text evidence="2">The C-terminal short (CTS) helix is essential for catalytic activity. It may be accommodated as a transmembrane helix in the thinned membrane environment of the complex, similarly to the signal peptide in the complex substrates.</text>
</comment>
<comment type="similarity">
    <text evidence="4">Belongs to the peptidase S26B family.</text>
</comment>
<reference key="1">
    <citation type="journal article" date="2010" name="Nat. Biotechnol.">
        <title>Genome sequence of the model mushroom Schizophyllum commune.</title>
        <authorList>
            <person name="Ohm R.A."/>
            <person name="de Jong J.F."/>
            <person name="Lugones L.G."/>
            <person name="Aerts A."/>
            <person name="Kothe E."/>
            <person name="Stajich J.E."/>
            <person name="de Vries R.P."/>
            <person name="Record E."/>
            <person name="Levasseur A."/>
            <person name="Baker S.E."/>
            <person name="Bartholomew K.A."/>
            <person name="Coutinho P.M."/>
            <person name="Erdmann S."/>
            <person name="Fowler T.J."/>
            <person name="Gathman A.C."/>
            <person name="Lombard V."/>
            <person name="Henrissat B."/>
            <person name="Knabe N."/>
            <person name="Kuees U."/>
            <person name="Lilly W.W."/>
            <person name="Lindquist E."/>
            <person name="Lucas S."/>
            <person name="Magnuson J.K."/>
            <person name="Piumi F."/>
            <person name="Raudaskoski M."/>
            <person name="Salamov A."/>
            <person name="Schmutz J."/>
            <person name="Schwarze F.W.M.R."/>
            <person name="vanKuyk P.A."/>
            <person name="Horton J.S."/>
            <person name="Grigoriev I.V."/>
            <person name="Woesten H.A.B."/>
        </authorList>
    </citation>
    <scope>NUCLEOTIDE SEQUENCE [LARGE SCALE GENOMIC DNA]</scope>
    <source>
        <strain>H4-8 / FGSC 9210</strain>
    </source>
</reference>
<organism>
    <name type="scientific">Schizophyllum commune (strain H4-8 / FGSC 9210)</name>
    <name type="common">Split gill fungus</name>
    <dbReference type="NCBI Taxonomy" id="578458"/>
    <lineage>
        <taxon>Eukaryota</taxon>
        <taxon>Fungi</taxon>
        <taxon>Dikarya</taxon>
        <taxon>Basidiomycota</taxon>
        <taxon>Agaricomycotina</taxon>
        <taxon>Agaricomycetes</taxon>
        <taxon>Agaricomycetidae</taxon>
        <taxon>Agaricales</taxon>
        <taxon>Schizophyllaceae</taxon>
        <taxon>Schizophyllum</taxon>
    </lineage>
</organism>
<accession>D8Q7Q5</accession>
<sequence length="193" mass="21588">MFSEELKAFRRLGIRHLLLQALNFASVIASGLMMWKGLGVITNTESPIVVVLSGSMEPAFYRGDLLFLTNPSGVRFHTGDITVYKVPNGDIPIVHRVLETHEIAPNATFVPHKYNRAYTPEDQLLLTKGDNNPIDDTGLYTQGMDWLERKHIVGKVRGFVPYVGYATIAMNDFPQLKYGLLGILGLMALIQRE</sequence>